<reference key="1">
    <citation type="journal article" date="2009" name="PLoS Genet.">
        <title>Organised genome dynamics in the Escherichia coli species results in highly diverse adaptive paths.</title>
        <authorList>
            <person name="Touchon M."/>
            <person name="Hoede C."/>
            <person name="Tenaillon O."/>
            <person name="Barbe V."/>
            <person name="Baeriswyl S."/>
            <person name="Bidet P."/>
            <person name="Bingen E."/>
            <person name="Bonacorsi S."/>
            <person name="Bouchier C."/>
            <person name="Bouvet O."/>
            <person name="Calteau A."/>
            <person name="Chiapello H."/>
            <person name="Clermont O."/>
            <person name="Cruveiller S."/>
            <person name="Danchin A."/>
            <person name="Diard M."/>
            <person name="Dossat C."/>
            <person name="Karoui M.E."/>
            <person name="Frapy E."/>
            <person name="Garry L."/>
            <person name="Ghigo J.M."/>
            <person name="Gilles A.M."/>
            <person name="Johnson J."/>
            <person name="Le Bouguenec C."/>
            <person name="Lescat M."/>
            <person name="Mangenot S."/>
            <person name="Martinez-Jehanne V."/>
            <person name="Matic I."/>
            <person name="Nassif X."/>
            <person name="Oztas S."/>
            <person name="Petit M.A."/>
            <person name="Pichon C."/>
            <person name="Rouy Z."/>
            <person name="Ruf C.S."/>
            <person name="Schneider D."/>
            <person name="Tourret J."/>
            <person name="Vacherie B."/>
            <person name="Vallenet D."/>
            <person name="Medigue C."/>
            <person name="Rocha E.P.C."/>
            <person name="Denamur E."/>
        </authorList>
    </citation>
    <scope>NUCLEOTIDE SEQUENCE [LARGE SCALE GENOMIC DNA]</scope>
    <source>
        <strain>ED1a</strain>
    </source>
</reference>
<organism>
    <name type="scientific">Escherichia coli O81 (strain ED1a)</name>
    <dbReference type="NCBI Taxonomy" id="585397"/>
    <lineage>
        <taxon>Bacteria</taxon>
        <taxon>Pseudomonadati</taxon>
        <taxon>Pseudomonadota</taxon>
        <taxon>Gammaproteobacteria</taxon>
        <taxon>Enterobacterales</taxon>
        <taxon>Enterobacteriaceae</taxon>
        <taxon>Escherichia</taxon>
    </lineage>
</organism>
<gene>
    <name evidence="1" type="primary">rpmH</name>
    <name type="ordered locus">ECED1_4394</name>
</gene>
<name>RL34_ECO81</name>
<feature type="chain" id="PRO_1000134444" description="Large ribosomal subunit protein bL34">
    <location>
        <begin position="1"/>
        <end position="46"/>
    </location>
</feature>
<proteinExistence type="inferred from homology"/>
<keyword id="KW-0687">Ribonucleoprotein</keyword>
<keyword id="KW-0689">Ribosomal protein</keyword>
<comment type="similarity">
    <text evidence="1">Belongs to the bacterial ribosomal protein bL34 family.</text>
</comment>
<protein>
    <recommendedName>
        <fullName evidence="1">Large ribosomal subunit protein bL34</fullName>
    </recommendedName>
    <alternativeName>
        <fullName evidence="2">50S ribosomal protein L34</fullName>
    </alternativeName>
</protein>
<dbReference type="EMBL" id="CU928162">
    <property type="protein sequence ID" value="CAR10519.2"/>
    <property type="molecule type" value="Genomic_DNA"/>
</dbReference>
<dbReference type="RefSeq" id="WP_000831330.1">
    <property type="nucleotide sequence ID" value="NC_011745.1"/>
</dbReference>
<dbReference type="SMR" id="B7N2E8"/>
<dbReference type="GeneID" id="98190980"/>
<dbReference type="KEGG" id="ecq:ECED1_4394"/>
<dbReference type="HOGENOM" id="CLU_129938_2_1_6"/>
<dbReference type="Proteomes" id="UP000000748">
    <property type="component" value="Chromosome"/>
</dbReference>
<dbReference type="GO" id="GO:1990904">
    <property type="term" value="C:ribonucleoprotein complex"/>
    <property type="evidence" value="ECO:0007669"/>
    <property type="project" value="UniProtKB-KW"/>
</dbReference>
<dbReference type="GO" id="GO:0005840">
    <property type="term" value="C:ribosome"/>
    <property type="evidence" value="ECO:0007669"/>
    <property type="project" value="UniProtKB-KW"/>
</dbReference>
<dbReference type="GO" id="GO:0003735">
    <property type="term" value="F:structural constituent of ribosome"/>
    <property type="evidence" value="ECO:0007669"/>
    <property type="project" value="InterPro"/>
</dbReference>
<dbReference type="GO" id="GO:0006412">
    <property type="term" value="P:translation"/>
    <property type="evidence" value="ECO:0007669"/>
    <property type="project" value="UniProtKB-UniRule"/>
</dbReference>
<dbReference type="FunFam" id="1.10.287.3980:FF:000001">
    <property type="entry name" value="Mitochondrial ribosomal protein L34"/>
    <property type="match status" value="1"/>
</dbReference>
<dbReference type="Gene3D" id="1.10.287.3980">
    <property type="match status" value="1"/>
</dbReference>
<dbReference type="HAMAP" id="MF_00391">
    <property type="entry name" value="Ribosomal_bL34"/>
    <property type="match status" value="1"/>
</dbReference>
<dbReference type="InterPro" id="IPR000271">
    <property type="entry name" value="Ribosomal_bL34"/>
</dbReference>
<dbReference type="InterPro" id="IPR020939">
    <property type="entry name" value="Ribosomal_bL34_CS"/>
</dbReference>
<dbReference type="NCBIfam" id="TIGR01030">
    <property type="entry name" value="rpmH_bact"/>
    <property type="match status" value="1"/>
</dbReference>
<dbReference type="PANTHER" id="PTHR14503:SF4">
    <property type="entry name" value="LARGE RIBOSOMAL SUBUNIT PROTEIN BL34M"/>
    <property type="match status" value="1"/>
</dbReference>
<dbReference type="PANTHER" id="PTHR14503">
    <property type="entry name" value="MITOCHONDRIAL RIBOSOMAL PROTEIN 34 FAMILY MEMBER"/>
    <property type="match status" value="1"/>
</dbReference>
<dbReference type="Pfam" id="PF00468">
    <property type="entry name" value="Ribosomal_L34"/>
    <property type="match status" value="1"/>
</dbReference>
<dbReference type="PROSITE" id="PS00784">
    <property type="entry name" value="RIBOSOMAL_L34"/>
    <property type="match status" value="1"/>
</dbReference>
<sequence length="46" mass="5380">MKRTFQPSVLKRNRSHGFRARMATKNGRQVLARRRAKGRARLTVSK</sequence>
<accession>B7N2E8</accession>
<evidence type="ECO:0000255" key="1">
    <source>
        <dbReference type="HAMAP-Rule" id="MF_00391"/>
    </source>
</evidence>
<evidence type="ECO:0000305" key="2"/>